<accession>Q9PQ42</accession>
<organism>
    <name type="scientific">Ureaplasma parvum serovar 3 (strain ATCC 700970)</name>
    <dbReference type="NCBI Taxonomy" id="273119"/>
    <lineage>
        <taxon>Bacteria</taxon>
        <taxon>Bacillati</taxon>
        <taxon>Mycoplasmatota</taxon>
        <taxon>Mycoplasmoidales</taxon>
        <taxon>Mycoplasmoidaceae</taxon>
        <taxon>Ureaplasma</taxon>
    </lineage>
</organism>
<proteinExistence type="inferred from homology"/>
<name>RUVB_UREPA</name>
<sequence>MKTNYEFRPQYLKDFIGKEQLKNNLKVYLTASKRLENSFDHTLLHGLSGTGKTTLALIIANEMNVNCHITQGNLLNKPIDIINLLSLIKENDVVFIDEIHACGLGAFETLYSVLEDFCIDINIGKDFNSKMTRLKIPHFTLIGATTIFGKIPKSLEERFGHIFHLNEYEPSEISAIILKNNQMHFQIDLNEEEIDLIANNAKGIPRLANRLLKRVVDFKINGFNDIKNIFKKIQIYEFGLDEQDINYLNVLYRQDNEIGLKSIAQILRLDQYTIETKIEPYLIQHHFINKNLRGRKITIEGIDFLKNNQLIK</sequence>
<feature type="chain" id="PRO_0000165626" description="Holliday junction branch migration complex subunit RuvB">
    <location>
        <begin position="1"/>
        <end position="312"/>
    </location>
</feature>
<feature type="region of interest" description="Large ATPase domain (RuvB-L)" evidence="1">
    <location>
        <begin position="1"/>
        <end position="168"/>
    </location>
</feature>
<feature type="region of interest" description="Small ATPAse domain (RuvB-S)" evidence="1">
    <location>
        <begin position="169"/>
        <end position="234"/>
    </location>
</feature>
<feature type="region of interest" description="Head domain (RuvB-H)" evidence="1">
    <location>
        <begin position="237"/>
        <end position="312"/>
    </location>
</feature>
<feature type="binding site" evidence="1">
    <location>
        <position position="8"/>
    </location>
    <ligand>
        <name>ATP</name>
        <dbReference type="ChEBI" id="CHEBI:30616"/>
    </ligand>
</feature>
<feature type="binding site" evidence="1">
    <location>
        <position position="49"/>
    </location>
    <ligand>
        <name>ATP</name>
        <dbReference type="ChEBI" id="CHEBI:30616"/>
    </ligand>
</feature>
<feature type="binding site" evidence="1">
    <location>
        <position position="52"/>
    </location>
    <ligand>
        <name>ATP</name>
        <dbReference type="ChEBI" id="CHEBI:30616"/>
    </ligand>
</feature>
<feature type="binding site" evidence="1">
    <location>
        <position position="53"/>
    </location>
    <ligand>
        <name>ATP</name>
        <dbReference type="ChEBI" id="CHEBI:30616"/>
    </ligand>
</feature>
<feature type="binding site" evidence="1">
    <location>
        <position position="53"/>
    </location>
    <ligand>
        <name>Mg(2+)</name>
        <dbReference type="ChEBI" id="CHEBI:18420"/>
    </ligand>
</feature>
<feature type="binding site" evidence="1">
    <location>
        <position position="54"/>
    </location>
    <ligand>
        <name>ATP</name>
        <dbReference type="ChEBI" id="CHEBI:30616"/>
    </ligand>
</feature>
<feature type="binding site" evidence="1">
    <location>
        <begin position="115"/>
        <end position="117"/>
    </location>
    <ligand>
        <name>ATP</name>
        <dbReference type="ChEBI" id="CHEBI:30616"/>
    </ligand>
</feature>
<feature type="binding site" evidence="1">
    <location>
        <position position="158"/>
    </location>
    <ligand>
        <name>ATP</name>
        <dbReference type="ChEBI" id="CHEBI:30616"/>
    </ligand>
</feature>
<feature type="binding site" evidence="1">
    <location>
        <position position="168"/>
    </location>
    <ligand>
        <name>ATP</name>
        <dbReference type="ChEBI" id="CHEBI:30616"/>
    </ligand>
</feature>
<feature type="binding site" evidence="1">
    <location>
        <position position="206"/>
    </location>
    <ligand>
        <name>ATP</name>
        <dbReference type="ChEBI" id="CHEBI:30616"/>
    </ligand>
</feature>
<feature type="binding site" evidence="1">
    <location>
        <position position="290"/>
    </location>
    <ligand>
        <name>DNA</name>
        <dbReference type="ChEBI" id="CHEBI:16991"/>
    </ligand>
</feature>
<feature type="binding site" evidence="1">
    <location>
        <position position="295"/>
    </location>
    <ligand>
        <name>DNA</name>
        <dbReference type="ChEBI" id="CHEBI:16991"/>
    </ligand>
</feature>
<evidence type="ECO:0000255" key="1">
    <source>
        <dbReference type="HAMAP-Rule" id="MF_00016"/>
    </source>
</evidence>
<dbReference type="EC" id="3.6.4.-" evidence="1"/>
<dbReference type="EMBL" id="AF222894">
    <property type="protein sequence ID" value="AAF30860.1"/>
    <property type="molecule type" value="Genomic_DNA"/>
</dbReference>
<dbReference type="RefSeq" id="WP_006689015.1">
    <property type="nucleotide sequence ID" value="NC_002162.1"/>
</dbReference>
<dbReference type="SMR" id="Q9PQ42"/>
<dbReference type="STRING" id="273119.UU448"/>
<dbReference type="EnsemblBacteria" id="AAF30860">
    <property type="protein sequence ID" value="AAF30860"/>
    <property type="gene ID" value="UU448"/>
</dbReference>
<dbReference type="GeneID" id="29672567"/>
<dbReference type="KEGG" id="uur:UU448"/>
<dbReference type="eggNOG" id="COG2255">
    <property type="taxonomic scope" value="Bacteria"/>
</dbReference>
<dbReference type="HOGENOM" id="CLU_055599_1_0_14"/>
<dbReference type="OrthoDB" id="9804478at2"/>
<dbReference type="Proteomes" id="UP000000423">
    <property type="component" value="Chromosome"/>
</dbReference>
<dbReference type="GO" id="GO:0005737">
    <property type="term" value="C:cytoplasm"/>
    <property type="evidence" value="ECO:0007669"/>
    <property type="project" value="UniProtKB-SubCell"/>
</dbReference>
<dbReference type="GO" id="GO:0048476">
    <property type="term" value="C:Holliday junction resolvase complex"/>
    <property type="evidence" value="ECO:0007669"/>
    <property type="project" value="UniProtKB-UniRule"/>
</dbReference>
<dbReference type="GO" id="GO:0005524">
    <property type="term" value="F:ATP binding"/>
    <property type="evidence" value="ECO:0007669"/>
    <property type="project" value="UniProtKB-UniRule"/>
</dbReference>
<dbReference type="GO" id="GO:0016887">
    <property type="term" value="F:ATP hydrolysis activity"/>
    <property type="evidence" value="ECO:0007669"/>
    <property type="project" value="InterPro"/>
</dbReference>
<dbReference type="GO" id="GO:0000400">
    <property type="term" value="F:four-way junction DNA binding"/>
    <property type="evidence" value="ECO:0007669"/>
    <property type="project" value="UniProtKB-UniRule"/>
</dbReference>
<dbReference type="GO" id="GO:0009378">
    <property type="term" value="F:four-way junction helicase activity"/>
    <property type="evidence" value="ECO:0007669"/>
    <property type="project" value="InterPro"/>
</dbReference>
<dbReference type="GO" id="GO:0006310">
    <property type="term" value="P:DNA recombination"/>
    <property type="evidence" value="ECO:0007669"/>
    <property type="project" value="UniProtKB-UniRule"/>
</dbReference>
<dbReference type="GO" id="GO:0006281">
    <property type="term" value="P:DNA repair"/>
    <property type="evidence" value="ECO:0007669"/>
    <property type="project" value="UniProtKB-UniRule"/>
</dbReference>
<dbReference type="CDD" id="cd00009">
    <property type="entry name" value="AAA"/>
    <property type="match status" value="1"/>
</dbReference>
<dbReference type="Gene3D" id="1.10.8.60">
    <property type="match status" value="1"/>
</dbReference>
<dbReference type="Gene3D" id="3.40.50.300">
    <property type="entry name" value="P-loop containing nucleotide triphosphate hydrolases"/>
    <property type="match status" value="1"/>
</dbReference>
<dbReference type="Gene3D" id="1.10.10.10">
    <property type="entry name" value="Winged helix-like DNA-binding domain superfamily/Winged helix DNA-binding domain"/>
    <property type="match status" value="1"/>
</dbReference>
<dbReference type="HAMAP" id="MF_00016">
    <property type="entry name" value="DNA_HJ_migration_RuvB"/>
    <property type="match status" value="1"/>
</dbReference>
<dbReference type="InterPro" id="IPR003593">
    <property type="entry name" value="AAA+_ATPase"/>
</dbReference>
<dbReference type="InterPro" id="IPR041445">
    <property type="entry name" value="AAA_lid_4"/>
</dbReference>
<dbReference type="InterPro" id="IPR004605">
    <property type="entry name" value="DNA_helicase_Holl-junc_RuvB"/>
</dbReference>
<dbReference type="InterPro" id="IPR027417">
    <property type="entry name" value="P-loop_NTPase"/>
</dbReference>
<dbReference type="InterPro" id="IPR008824">
    <property type="entry name" value="RuvB-like_N"/>
</dbReference>
<dbReference type="InterPro" id="IPR008823">
    <property type="entry name" value="RuvB_C"/>
</dbReference>
<dbReference type="InterPro" id="IPR036388">
    <property type="entry name" value="WH-like_DNA-bd_sf"/>
</dbReference>
<dbReference type="InterPro" id="IPR036390">
    <property type="entry name" value="WH_DNA-bd_sf"/>
</dbReference>
<dbReference type="NCBIfam" id="NF000868">
    <property type="entry name" value="PRK00080.1"/>
    <property type="match status" value="1"/>
</dbReference>
<dbReference type="NCBIfam" id="TIGR00635">
    <property type="entry name" value="ruvB"/>
    <property type="match status" value="1"/>
</dbReference>
<dbReference type="PANTHER" id="PTHR42848">
    <property type="match status" value="1"/>
</dbReference>
<dbReference type="PANTHER" id="PTHR42848:SF1">
    <property type="entry name" value="HOLLIDAY JUNCTION BRANCH MIGRATION COMPLEX SUBUNIT RUVB"/>
    <property type="match status" value="1"/>
</dbReference>
<dbReference type="Pfam" id="PF17864">
    <property type="entry name" value="AAA_lid_4"/>
    <property type="match status" value="1"/>
</dbReference>
<dbReference type="Pfam" id="PF05491">
    <property type="entry name" value="RuvB_C"/>
    <property type="match status" value="1"/>
</dbReference>
<dbReference type="Pfam" id="PF05496">
    <property type="entry name" value="RuvB_N"/>
    <property type="match status" value="1"/>
</dbReference>
<dbReference type="SMART" id="SM00382">
    <property type="entry name" value="AAA"/>
    <property type="match status" value="1"/>
</dbReference>
<dbReference type="SUPFAM" id="SSF52540">
    <property type="entry name" value="P-loop containing nucleoside triphosphate hydrolases"/>
    <property type="match status" value="1"/>
</dbReference>
<dbReference type="SUPFAM" id="SSF46785">
    <property type="entry name" value="Winged helix' DNA-binding domain"/>
    <property type="match status" value="1"/>
</dbReference>
<protein>
    <recommendedName>
        <fullName evidence="1">Holliday junction branch migration complex subunit RuvB</fullName>
        <ecNumber evidence="1">3.6.4.-</ecNumber>
    </recommendedName>
</protein>
<keyword id="KW-0067">ATP-binding</keyword>
<keyword id="KW-0963">Cytoplasm</keyword>
<keyword id="KW-0227">DNA damage</keyword>
<keyword id="KW-0233">DNA recombination</keyword>
<keyword id="KW-0234">DNA repair</keyword>
<keyword id="KW-0238">DNA-binding</keyword>
<keyword id="KW-0378">Hydrolase</keyword>
<keyword id="KW-0547">Nucleotide-binding</keyword>
<keyword id="KW-1185">Reference proteome</keyword>
<gene>
    <name evidence="1" type="primary">ruvB</name>
    <name type="ordered locus">UU448</name>
</gene>
<comment type="function">
    <text evidence="1">The RuvA-RuvB-RuvC complex processes Holliday junction (HJ) DNA during genetic recombination and DNA repair, while the RuvA-RuvB complex plays an important role in the rescue of blocked DNA replication forks via replication fork reversal (RFR). RuvA specifically binds to HJ cruciform DNA, conferring on it an open structure. The RuvB hexamer acts as an ATP-dependent pump, pulling dsDNA into and through the RuvAB complex. RuvB forms 2 homohexamers on either side of HJ DNA bound by 1 or 2 RuvA tetramers; 4 subunits per hexamer contact DNA at a time. Coordinated motions by a converter formed by DNA-disengaged RuvB subunits stimulates ATP hydrolysis and nucleotide exchange. Immobilization of the converter enables RuvB to convert the ATP-contained energy into a lever motion, pulling 2 nucleotides of DNA out of the RuvA tetramer per ATP hydrolyzed, thus driving DNA branch migration. The RuvB motors rotate together with the DNA substrate, which together with the progressing nucleotide cycle form the mechanistic basis for DNA recombination by continuous HJ branch migration. Branch migration allows RuvC to scan DNA until it finds its consensus sequence, where it cleaves and resolves cruciform DNA.</text>
</comment>
<comment type="catalytic activity">
    <reaction evidence="1">
        <text>ATP + H2O = ADP + phosphate + H(+)</text>
        <dbReference type="Rhea" id="RHEA:13065"/>
        <dbReference type="ChEBI" id="CHEBI:15377"/>
        <dbReference type="ChEBI" id="CHEBI:15378"/>
        <dbReference type="ChEBI" id="CHEBI:30616"/>
        <dbReference type="ChEBI" id="CHEBI:43474"/>
        <dbReference type="ChEBI" id="CHEBI:456216"/>
    </reaction>
</comment>
<comment type="subunit">
    <text evidence="1">Homohexamer. Forms an RuvA(8)-RuvB(12)-Holliday junction (HJ) complex. HJ DNA is sandwiched between 2 RuvA tetramers; dsDNA enters through RuvA and exits via RuvB. An RuvB hexamer assembles on each DNA strand where it exits the tetramer. Each RuvB hexamer is contacted by two RuvA subunits (via domain III) on 2 adjacent RuvB subunits; this complex drives branch migration. In the full resolvosome a probable DNA-RuvA(4)-RuvB(12)-RuvC(2) complex forms which resolves the HJ.</text>
</comment>
<comment type="subcellular location">
    <subcellularLocation>
        <location evidence="1">Cytoplasm</location>
    </subcellularLocation>
</comment>
<comment type="domain">
    <text evidence="1">Has 3 domains, the large (RuvB-L) and small ATPase (RuvB-S) domains and the C-terminal head (RuvB-H) domain. The head domain binds DNA, while the ATPase domains jointly bind ATP, ADP or are empty depending on the state of the subunit in the translocation cycle. During a single DNA translocation step the structure of each domain remains the same, but their relative positions change.</text>
</comment>
<comment type="similarity">
    <text evidence="1">Belongs to the RuvB family.</text>
</comment>
<reference key="1">
    <citation type="journal article" date="2000" name="Nature">
        <title>The complete sequence of the mucosal pathogen Ureaplasma urealyticum.</title>
        <authorList>
            <person name="Glass J.I."/>
            <person name="Lefkowitz E.J."/>
            <person name="Glass J.S."/>
            <person name="Heiner C.R."/>
            <person name="Chen E.Y."/>
            <person name="Cassell G.H."/>
        </authorList>
    </citation>
    <scope>NUCLEOTIDE SEQUENCE [LARGE SCALE GENOMIC DNA]</scope>
    <source>
        <strain>ATCC 700970</strain>
    </source>
</reference>